<organism>
    <name type="scientific">Mytilus trossulus</name>
    <name type="common">Blue mussel</name>
    <dbReference type="NCBI Taxonomy" id="6551"/>
    <lineage>
        <taxon>Eukaryota</taxon>
        <taxon>Metazoa</taxon>
        <taxon>Spiralia</taxon>
        <taxon>Lophotrochozoa</taxon>
        <taxon>Mollusca</taxon>
        <taxon>Bivalvia</taxon>
        <taxon>Autobranchia</taxon>
        <taxon>Pteriomorphia</taxon>
        <taxon>Mytilida</taxon>
        <taxon>Mytiloidea</taxon>
        <taxon>Mytilidae</taxon>
        <taxon>Mytilinae</taxon>
        <taxon>Mytilus</taxon>
    </lineage>
</organism>
<accession>Q6WV67</accession>
<evidence type="ECO:0000250" key="1"/>
<evidence type="ECO:0000256" key="2">
    <source>
        <dbReference type="SAM" id="MobiDB-lite"/>
    </source>
</evidence>
<evidence type="ECO:0000305" key="3"/>
<name>H2A_MYTTR</name>
<protein>
    <recommendedName>
        <fullName>Histone H2A</fullName>
    </recommendedName>
</protein>
<dbReference type="EMBL" id="AY267758">
    <property type="protein sequence ID" value="AAP94677.1"/>
    <property type="molecule type" value="Genomic_DNA"/>
</dbReference>
<dbReference type="SMR" id="Q6WV67"/>
<dbReference type="GO" id="GO:0000786">
    <property type="term" value="C:nucleosome"/>
    <property type="evidence" value="ECO:0007669"/>
    <property type="project" value="UniProtKB-KW"/>
</dbReference>
<dbReference type="GO" id="GO:0005634">
    <property type="term" value="C:nucleus"/>
    <property type="evidence" value="ECO:0007669"/>
    <property type="project" value="UniProtKB-SubCell"/>
</dbReference>
<dbReference type="GO" id="GO:0003677">
    <property type="term" value="F:DNA binding"/>
    <property type="evidence" value="ECO:0007669"/>
    <property type="project" value="UniProtKB-KW"/>
</dbReference>
<dbReference type="GO" id="GO:0046982">
    <property type="term" value="F:protein heterodimerization activity"/>
    <property type="evidence" value="ECO:0007669"/>
    <property type="project" value="InterPro"/>
</dbReference>
<dbReference type="GO" id="GO:0030527">
    <property type="term" value="F:structural constituent of chromatin"/>
    <property type="evidence" value="ECO:0007669"/>
    <property type="project" value="InterPro"/>
</dbReference>
<dbReference type="CDD" id="cd00074">
    <property type="entry name" value="HFD_H2A"/>
    <property type="match status" value="1"/>
</dbReference>
<dbReference type="FunFam" id="1.10.20.10:FF:000020">
    <property type="entry name" value="Histone H2A"/>
    <property type="match status" value="1"/>
</dbReference>
<dbReference type="Gene3D" id="1.10.20.10">
    <property type="entry name" value="Histone, subunit A"/>
    <property type="match status" value="1"/>
</dbReference>
<dbReference type="InterPro" id="IPR009072">
    <property type="entry name" value="Histone-fold"/>
</dbReference>
<dbReference type="InterPro" id="IPR002119">
    <property type="entry name" value="Histone_H2A"/>
</dbReference>
<dbReference type="InterPro" id="IPR007125">
    <property type="entry name" value="Histone_H2A/H2B/H3"/>
</dbReference>
<dbReference type="InterPro" id="IPR032454">
    <property type="entry name" value="Histone_H2A_C"/>
</dbReference>
<dbReference type="InterPro" id="IPR032458">
    <property type="entry name" value="Histone_H2A_CS"/>
</dbReference>
<dbReference type="PANTHER" id="PTHR23430">
    <property type="entry name" value="HISTONE H2A"/>
    <property type="match status" value="1"/>
</dbReference>
<dbReference type="Pfam" id="PF00125">
    <property type="entry name" value="Histone"/>
    <property type="match status" value="1"/>
</dbReference>
<dbReference type="Pfam" id="PF16211">
    <property type="entry name" value="Histone_H2A_C"/>
    <property type="match status" value="1"/>
</dbReference>
<dbReference type="PRINTS" id="PR00620">
    <property type="entry name" value="HISTONEH2A"/>
</dbReference>
<dbReference type="SMART" id="SM00414">
    <property type="entry name" value="H2A"/>
    <property type="match status" value="1"/>
</dbReference>
<dbReference type="SUPFAM" id="SSF47113">
    <property type="entry name" value="Histone-fold"/>
    <property type="match status" value="1"/>
</dbReference>
<dbReference type="PROSITE" id="PS00046">
    <property type="entry name" value="HISTONE_H2A"/>
    <property type="match status" value="1"/>
</dbReference>
<comment type="function">
    <text>Core component of nucleosome. Nucleosomes wrap and compact DNA into chromatin, limiting DNA accessibility to the cellular machineries which require DNA as a template. Histones thereby play a central role in transcription regulation, DNA repair, DNA replication and chromosomal stability. DNA accessibility is regulated via a complex set of post-translational modifications of histones, also called histone code, and nucleosome remodeling.</text>
</comment>
<comment type="subunit">
    <text>The nucleosome is a histone octamer containing two molecules each of H2A, H2B, H3 and H4 assembled in one H3-H4 heterotetramer and two H2A-H2B heterodimers. The octamer wraps approximately 147 bp of DNA.</text>
</comment>
<comment type="subcellular location">
    <subcellularLocation>
        <location>Nucleus</location>
    </subcellularLocation>
    <subcellularLocation>
        <location>Chromosome</location>
    </subcellularLocation>
</comment>
<comment type="similarity">
    <text evidence="3">Belongs to the histone H2A family.</text>
</comment>
<sequence length="125" mass="13288">MSGRGKGGKAKAKAKSRSSRAGLQFPVGRIHRLLRKGNYAGRVGAGAPVYLAAVLEYLAAEVLELAGNAARDNKKSRIIPRHLQLAIRNDEELNKLLSGVTIAQGGVLPNIQAVLLPKKTQKAAK</sequence>
<reference key="1">
    <citation type="journal article" date="2004" name="J. Mol. Evol.">
        <title>Molecular evolutionary characterization of the mussel Mytilus histone multigene family: first record of a tandemly repeated unit of five histone genes containing an H1 subtype with 'orphon' features.</title>
        <authorList>
            <person name="Eirin-Lopez J.M."/>
            <person name="Ruiz F."/>
            <person name="Gonzalez-Tizon A.M."/>
            <person name="Martinez A."/>
            <person name="Sanchez L."/>
            <person name="Mendez J."/>
        </authorList>
    </citation>
    <scope>NUCLEOTIDE SEQUENCE [GENOMIC DNA]</scope>
</reference>
<proteinExistence type="inferred from homology"/>
<feature type="initiator methionine" description="Removed" evidence="1">
    <location>
        <position position="1"/>
    </location>
</feature>
<feature type="chain" id="PRO_0000055255" description="Histone H2A">
    <location>
        <begin position="2"/>
        <end position="125"/>
    </location>
</feature>
<feature type="region of interest" description="Disordered" evidence="2">
    <location>
        <begin position="1"/>
        <end position="21"/>
    </location>
</feature>
<feature type="compositionally biased region" description="Basic residues" evidence="2">
    <location>
        <begin position="1"/>
        <end position="18"/>
    </location>
</feature>
<feature type="modified residue" description="N-acetylserine" evidence="1">
    <location>
        <position position="2"/>
    </location>
</feature>
<feature type="modified residue" description="N5-methylglutamine" evidence="1">
    <location>
        <position position="104"/>
    </location>
</feature>
<keyword id="KW-0007">Acetylation</keyword>
<keyword id="KW-0158">Chromosome</keyword>
<keyword id="KW-0238">DNA-binding</keyword>
<keyword id="KW-0488">Methylation</keyword>
<keyword id="KW-0544">Nucleosome core</keyword>
<keyword id="KW-0539">Nucleus</keyword>